<gene>
    <name type="ordered locus">NGR_c34590</name>
</gene>
<sequence length="324" mass="35294">MTAHLKKAELHCHIEGATPPELALRQARKYSVDTSAIIRDKAYVWEDFTSFVRCYDSVASLFRTQGDYALLAETYLTELAEAGTIYSEIIVSPDHGNTIGLGADAYLEGLAAGMEAAKAKTGIESRMLITGIRHLGPESVAKTAEYAAMRRHPLVTGFNLAGEERMHSVAEFARAFDIVRDAGLGLTIHAGELSGAFSVRDALDHVRPARISHGVRAIEDADLVKRLAEEGVVLEVCPGSNVSLQVFADFASHPLRPLYEAGVRVTLNSDDPPFFHTSLAQEYEVAAHVMGFSDSDIDRMTKTAIEAAFVDEPTRERLLAALHV</sequence>
<organism>
    <name type="scientific">Sinorhizobium fredii (strain NBRC 101917 / NGR234)</name>
    <dbReference type="NCBI Taxonomy" id="394"/>
    <lineage>
        <taxon>Bacteria</taxon>
        <taxon>Pseudomonadati</taxon>
        <taxon>Pseudomonadota</taxon>
        <taxon>Alphaproteobacteria</taxon>
        <taxon>Hyphomicrobiales</taxon>
        <taxon>Rhizobiaceae</taxon>
        <taxon>Sinorhizobium/Ensifer group</taxon>
        <taxon>Sinorhizobium</taxon>
    </lineage>
</organism>
<reference key="1">
    <citation type="journal article" date="2009" name="Appl. Environ. Microbiol.">
        <title>Rhizobium sp. strain NGR234 possesses a remarkable number of secretion systems.</title>
        <authorList>
            <person name="Schmeisser C."/>
            <person name="Liesegang H."/>
            <person name="Krysciak D."/>
            <person name="Bakkou N."/>
            <person name="Le Quere A."/>
            <person name="Wollherr A."/>
            <person name="Heinemeyer I."/>
            <person name="Morgenstern B."/>
            <person name="Pommerening-Roeser A."/>
            <person name="Flores M."/>
            <person name="Palacios R."/>
            <person name="Brenner S."/>
            <person name="Gottschalk G."/>
            <person name="Schmitz R.A."/>
            <person name="Broughton W.J."/>
            <person name="Perret X."/>
            <person name="Strittmatter A.W."/>
            <person name="Streit W.R."/>
        </authorList>
    </citation>
    <scope>NUCLEOTIDE SEQUENCE [LARGE SCALE GENOMIC DNA]</scope>
    <source>
        <strain>NBRC 101917 / NGR234</strain>
    </source>
</reference>
<evidence type="ECO:0000255" key="1">
    <source>
        <dbReference type="HAMAP-Rule" id="MF_01962"/>
    </source>
</evidence>
<comment type="function">
    <text evidence="1">Catalyzes the hydrolytic deamination of adenine to hypoxanthine. Plays an important role in the purine salvage pathway and in nitrogen catabolism.</text>
</comment>
<comment type="catalytic activity">
    <reaction evidence="1">
        <text>adenine + H2O + H(+) = hypoxanthine + NH4(+)</text>
        <dbReference type="Rhea" id="RHEA:23688"/>
        <dbReference type="ChEBI" id="CHEBI:15377"/>
        <dbReference type="ChEBI" id="CHEBI:15378"/>
        <dbReference type="ChEBI" id="CHEBI:16708"/>
        <dbReference type="ChEBI" id="CHEBI:17368"/>
        <dbReference type="ChEBI" id="CHEBI:28938"/>
        <dbReference type="EC" id="3.5.4.2"/>
    </reaction>
</comment>
<comment type="cofactor">
    <cofactor evidence="1">
        <name>Zn(2+)</name>
        <dbReference type="ChEBI" id="CHEBI:29105"/>
    </cofactor>
    <text evidence="1">Binds 1 zinc ion per subunit.</text>
</comment>
<comment type="similarity">
    <text evidence="1">Belongs to the metallo-dependent hydrolases superfamily. Adenosine and AMP deaminases family. Adenine deaminase type 2 subfamily.</text>
</comment>
<proteinExistence type="inferred from homology"/>
<dbReference type="EC" id="3.5.4.2" evidence="1"/>
<dbReference type="EMBL" id="CP001389">
    <property type="protein sequence ID" value="ACP27183.1"/>
    <property type="molecule type" value="Genomic_DNA"/>
</dbReference>
<dbReference type="RefSeq" id="WP_012709929.1">
    <property type="nucleotide sequence ID" value="NC_012587.1"/>
</dbReference>
<dbReference type="RefSeq" id="YP_002827936.1">
    <property type="nucleotide sequence ID" value="NC_012587.1"/>
</dbReference>
<dbReference type="SMR" id="C3MBH4"/>
<dbReference type="STRING" id="394.NGR_c34590"/>
<dbReference type="KEGG" id="rhi:NGR_c34590"/>
<dbReference type="PATRIC" id="fig|394.7.peg.6307"/>
<dbReference type="eggNOG" id="COG1816">
    <property type="taxonomic scope" value="Bacteria"/>
</dbReference>
<dbReference type="HOGENOM" id="CLU_039228_7_1_5"/>
<dbReference type="OrthoDB" id="105475at2"/>
<dbReference type="Proteomes" id="UP000001054">
    <property type="component" value="Chromosome"/>
</dbReference>
<dbReference type="GO" id="GO:0000034">
    <property type="term" value="F:adenine deaminase activity"/>
    <property type="evidence" value="ECO:0007669"/>
    <property type="project" value="UniProtKB-UniRule"/>
</dbReference>
<dbReference type="GO" id="GO:0008270">
    <property type="term" value="F:zinc ion binding"/>
    <property type="evidence" value="ECO:0007669"/>
    <property type="project" value="UniProtKB-UniRule"/>
</dbReference>
<dbReference type="GO" id="GO:0006146">
    <property type="term" value="P:adenine catabolic process"/>
    <property type="evidence" value="ECO:0007669"/>
    <property type="project" value="UniProtKB-UniRule"/>
</dbReference>
<dbReference type="GO" id="GO:0043103">
    <property type="term" value="P:hypoxanthine salvage"/>
    <property type="evidence" value="ECO:0007669"/>
    <property type="project" value="UniProtKB-UniRule"/>
</dbReference>
<dbReference type="GO" id="GO:0009117">
    <property type="term" value="P:nucleotide metabolic process"/>
    <property type="evidence" value="ECO:0007669"/>
    <property type="project" value="UniProtKB-KW"/>
</dbReference>
<dbReference type="CDD" id="cd01320">
    <property type="entry name" value="ADA"/>
    <property type="match status" value="1"/>
</dbReference>
<dbReference type="Gene3D" id="3.20.20.140">
    <property type="entry name" value="Metal-dependent hydrolases"/>
    <property type="match status" value="1"/>
</dbReference>
<dbReference type="HAMAP" id="MF_01962">
    <property type="entry name" value="Adenine_deaminase"/>
    <property type="match status" value="1"/>
</dbReference>
<dbReference type="InterPro" id="IPR001365">
    <property type="entry name" value="A_deaminase_dom"/>
</dbReference>
<dbReference type="InterPro" id="IPR028892">
    <property type="entry name" value="ADE"/>
</dbReference>
<dbReference type="InterPro" id="IPR006330">
    <property type="entry name" value="Ado/ade_deaminase"/>
</dbReference>
<dbReference type="InterPro" id="IPR032466">
    <property type="entry name" value="Metal_Hydrolase"/>
</dbReference>
<dbReference type="NCBIfam" id="TIGR01430">
    <property type="entry name" value="aden_deam"/>
    <property type="match status" value="1"/>
</dbReference>
<dbReference type="NCBIfam" id="NF006848">
    <property type="entry name" value="PRK09358.1-3"/>
    <property type="match status" value="1"/>
</dbReference>
<dbReference type="PANTHER" id="PTHR43114">
    <property type="entry name" value="ADENINE DEAMINASE"/>
    <property type="match status" value="1"/>
</dbReference>
<dbReference type="PANTHER" id="PTHR43114:SF6">
    <property type="entry name" value="ADENINE DEAMINASE"/>
    <property type="match status" value="1"/>
</dbReference>
<dbReference type="Pfam" id="PF00962">
    <property type="entry name" value="A_deaminase"/>
    <property type="match status" value="1"/>
</dbReference>
<dbReference type="SUPFAM" id="SSF51556">
    <property type="entry name" value="Metallo-dependent hydrolases"/>
    <property type="match status" value="1"/>
</dbReference>
<name>ADE_SINFN</name>
<accession>C3MBH4</accession>
<feature type="chain" id="PRO_1000146574" description="Adenine deaminase">
    <location>
        <begin position="1"/>
        <end position="324"/>
    </location>
</feature>
<feature type="active site" description="Proton donor" evidence="1">
    <location>
        <position position="192"/>
    </location>
</feature>
<feature type="binding site" evidence="1">
    <location>
        <position position="11"/>
    </location>
    <ligand>
        <name>Zn(2+)</name>
        <dbReference type="ChEBI" id="CHEBI:29105"/>
        <note>catalytic</note>
    </ligand>
</feature>
<feature type="binding site" evidence="1">
    <location>
        <position position="13"/>
    </location>
    <ligand>
        <name>Zn(2+)</name>
        <dbReference type="ChEBI" id="CHEBI:29105"/>
        <note>catalytic</note>
    </ligand>
</feature>
<feature type="binding site" evidence="1">
    <location>
        <position position="189"/>
    </location>
    <ligand>
        <name>Zn(2+)</name>
        <dbReference type="ChEBI" id="CHEBI:29105"/>
        <note>catalytic</note>
    </ligand>
</feature>
<feature type="binding site" evidence="1">
    <location>
        <position position="270"/>
    </location>
    <ligand>
        <name>Zn(2+)</name>
        <dbReference type="ChEBI" id="CHEBI:29105"/>
        <note>catalytic</note>
    </ligand>
</feature>
<feature type="binding site" evidence="1">
    <location>
        <position position="271"/>
    </location>
    <ligand>
        <name>substrate</name>
    </ligand>
</feature>
<feature type="site" description="Important for catalytic activity" evidence="1">
    <location>
        <position position="213"/>
    </location>
</feature>
<keyword id="KW-0378">Hydrolase</keyword>
<keyword id="KW-0479">Metal-binding</keyword>
<keyword id="KW-0546">Nucleotide metabolism</keyword>
<keyword id="KW-1185">Reference proteome</keyword>
<keyword id="KW-0862">Zinc</keyword>
<protein>
    <recommendedName>
        <fullName evidence="1">Adenine deaminase</fullName>
        <shortName evidence="1">ADE</shortName>
        <ecNumber evidence="1">3.5.4.2</ecNumber>
    </recommendedName>
    <alternativeName>
        <fullName evidence="1">Adenine aminohydrolase</fullName>
        <shortName evidence="1">AAH</shortName>
    </alternativeName>
</protein>